<keyword id="KW-0025">Alternative splicing</keyword>
<keyword id="KW-0158">Chromosome</keyword>
<keyword id="KW-0227">DNA damage</keyword>
<keyword id="KW-1017">Isopeptide bond</keyword>
<keyword id="KW-0539">Nucleus</keyword>
<keyword id="KW-0597">Phosphoprotein</keyword>
<keyword id="KW-1185">Reference proteome</keyword>
<keyword id="KW-0678">Repressor</keyword>
<keyword id="KW-0804">Transcription</keyword>
<keyword id="KW-0805">Transcription regulation</keyword>
<keyword id="KW-0832">Ubl conjugation</keyword>
<comment type="function">
    <text evidence="1 4">Chromatin protein that stabilizes SPIN1 and enhances its association with histone H3 trimethylated at both 'Lys-4' and 'Lys-9' (H3K4me3K9me3) (By similarity). Positively regulates poly-ADP-ribosylation in response to DNA damage; acts by facilitating PARP1 ADP-ribosyltransferase activity (PubMed:34737271).</text>
</comment>
<comment type="subunit">
    <text evidence="1">Interacts with SPIN1, SPIN2A, SPIN2B, SPIN3 and SPIN4 (By similarity). Interacts with TCF7L2 in a SPIN1-dependent manner (By similarity). Interacts with PARP1; promoting PARP1 ADP-ribosyltransferase activity (By similarity).</text>
</comment>
<comment type="subcellular location">
    <subcellularLocation>
        <location evidence="1">Nucleus</location>
    </subcellularLocation>
    <subcellularLocation>
        <location evidence="1">Chromosome</location>
    </subcellularLocation>
    <text evidence="1">Colocalizes with PARP1 to sites of DNA damage.</text>
</comment>
<comment type="alternative products">
    <event type="alternative splicing"/>
    <isoform>
        <id>Q05AH6-1</id>
        <name>1</name>
        <sequence type="displayed"/>
    </isoform>
    <isoform>
        <id>Q05AH6-2</id>
        <name>2</name>
        <sequence type="described" ref="VSP_031789 VSP_031790"/>
    </isoform>
</comment>
<comment type="disruption phenotype">
    <text evidence="4">Mice were born at the expected Mendelian rate and are viable (PubMed:34737271). Mice are however slightly smaller and display reduced levels of poly-ADP-ribosylation (PubMed:34737271). Moreover, they are hypersensitive to ionizing radiation-induced DNA damage (PubMed:34737271).</text>
</comment>
<comment type="caution">
    <text evidence="1 3">Was initially reported to inhibit the ability of SPIN1 to bind methylated histones (PubMed:29061846). However, it was later shown to play an opposite role and promote SPIN1 association with bivalent H3K4me3K9me3 mark (By similarity).</text>
</comment>
<accession>Q05AH6</accession>
<accession>Q3TI49</accession>
<accession>Q3TQH2</accession>
<name>SPNDC_MOUSE</name>
<dbReference type="EMBL" id="AK163590">
    <property type="protein sequence ID" value="BAE37410.1"/>
    <property type="molecule type" value="mRNA"/>
</dbReference>
<dbReference type="EMBL" id="AK168010">
    <property type="protein sequence ID" value="BAE39997.1"/>
    <property type="molecule type" value="mRNA"/>
</dbReference>
<dbReference type="EMBL" id="BC125249">
    <property type="protein sequence ID" value="AAI25250.1"/>
    <property type="molecule type" value="mRNA"/>
</dbReference>
<dbReference type="CCDS" id="CCDS29523.1">
    <molecule id="Q05AH6-1"/>
</dbReference>
<dbReference type="RefSeq" id="NP_001028311.2">
    <molecule id="Q05AH6-1"/>
    <property type="nucleotide sequence ID" value="NM_001033139.4"/>
</dbReference>
<dbReference type="RefSeq" id="NP_001161303.1">
    <molecule id="Q05AH6-2"/>
    <property type="nucleotide sequence ID" value="NM_001167831.2"/>
</dbReference>
<dbReference type="SMR" id="Q05AH6"/>
<dbReference type="FunCoup" id="Q05AH6">
    <property type="interactions" value="635"/>
</dbReference>
<dbReference type="STRING" id="10090.ENSMUSP00000025924"/>
<dbReference type="iPTMnet" id="Q05AH6"/>
<dbReference type="PhosphoSitePlus" id="Q05AH6"/>
<dbReference type="jPOST" id="Q05AH6"/>
<dbReference type="PaxDb" id="10090-ENSMUSP00000025924"/>
<dbReference type="PeptideAtlas" id="Q05AH6"/>
<dbReference type="ProteomicsDB" id="257353">
    <molecule id="Q05AH6-1"/>
</dbReference>
<dbReference type="ProteomicsDB" id="257354">
    <molecule id="Q05AH6-2"/>
</dbReference>
<dbReference type="Antibodypedia" id="51569">
    <property type="antibodies" value="44 antibodies from 11 providers"/>
</dbReference>
<dbReference type="Ensembl" id="ENSMUST00000025924.4">
    <molecule id="Q05AH6-1"/>
    <property type="protein sequence ID" value="ENSMUSP00000025924.3"/>
    <property type="gene ID" value="ENSMUSG00000024970.6"/>
</dbReference>
<dbReference type="GeneID" id="68229"/>
<dbReference type="KEGG" id="mmu:68229"/>
<dbReference type="UCSC" id="uc008gkv.2">
    <molecule id="Q05AH6-1"/>
    <property type="organism name" value="mouse"/>
</dbReference>
<dbReference type="UCSC" id="uc008gkw.2">
    <molecule id="Q05AH6-2"/>
    <property type="organism name" value="mouse"/>
</dbReference>
<dbReference type="AGR" id="MGI:2147611"/>
<dbReference type="CTD" id="144097"/>
<dbReference type="MGI" id="MGI:2147611">
    <property type="gene designation" value="Spindoc"/>
</dbReference>
<dbReference type="VEuPathDB" id="HostDB:ENSMUSG00000024970"/>
<dbReference type="eggNOG" id="ENOG502S4I6">
    <property type="taxonomic scope" value="Eukaryota"/>
</dbReference>
<dbReference type="GeneTree" id="ENSGT00410000025985"/>
<dbReference type="HOGENOM" id="CLU_061399_0_0_1"/>
<dbReference type="InParanoid" id="Q05AH6"/>
<dbReference type="OMA" id="GDTPDWP"/>
<dbReference type="OrthoDB" id="8962639at2759"/>
<dbReference type="PhylomeDB" id="Q05AH6"/>
<dbReference type="TreeFam" id="TF337165"/>
<dbReference type="BioGRID-ORCS" id="68229">
    <property type="hits" value="7 hits in 77 CRISPR screens"/>
</dbReference>
<dbReference type="ChiTaRS" id="Spindoc">
    <property type="organism name" value="mouse"/>
</dbReference>
<dbReference type="PRO" id="PR:Q05AH6"/>
<dbReference type="Proteomes" id="UP000000589">
    <property type="component" value="Chromosome 19"/>
</dbReference>
<dbReference type="RNAct" id="Q05AH6">
    <property type="molecule type" value="protein"/>
</dbReference>
<dbReference type="Bgee" id="ENSMUSG00000024970">
    <property type="expression patterns" value="Expressed in ventricular zone and 180 other cell types or tissues"/>
</dbReference>
<dbReference type="ExpressionAtlas" id="Q05AH6">
    <property type="expression patterns" value="baseline and differential"/>
</dbReference>
<dbReference type="GO" id="GO:0005634">
    <property type="term" value="C:nucleus"/>
    <property type="evidence" value="ECO:0000250"/>
    <property type="project" value="UniProtKB"/>
</dbReference>
<dbReference type="GO" id="GO:0090734">
    <property type="term" value="C:site of DNA damage"/>
    <property type="evidence" value="ECO:0000250"/>
    <property type="project" value="UniProtKB"/>
</dbReference>
<dbReference type="GO" id="GO:0006974">
    <property type="term" value="P:DNA damage response"/>
    <property type="evidence" value="ECO:0000250"/>
    <property type="project" value="UniProtKB"/>
</dbReference>
<dbReference type="GO" id="GO:0045892">
    <property type="term" value="P:negative regulation of DNA-templated transcription"/>
    <property type="evidence" value="ECO:0000314"/>
    <property type="project" value="UniProtKB"/>
</dbReference>
<dbReference type="GO" id="GO:0010835">
    <property type="term" value="P:regulation of protein ADP-ribosylation"/>
    <property type="evidence" value="ECO:0000315"/>
    <property type="project" value="UniProtKB"/>
</dbReference>
<dbReference type="InterPro" id="IPR040647">
    <property type="entry name" value="SPIN-DOC_Znf-C2H2"/>
</dbReference>
<dbReference type="InterPro" id="IPR052675">
    <property type="entry name" value="ZnF_transloc-Spindlin_int"/>
</dbReference>
<dbReference type="PANTHER" id="PTHR34589">
    <property type="entry name" value="SIMILAR TO RIKEN CDNA 2700081O15"/>
    <property type="match status" value="1"/>
</dbReference>
<dbReference type="PANTHER" id="PTHR34589:SF1">
    <property type="entry name" value="SPINDLIN INTERACTOR AND REPRESSOR OF CHROMATIN-BINDING PROTEIN"/>
    <property type="match status" value="1"/>
</dbReference>
<dbReference type="Pfam" id="PF18658">
    <property type="entry name" value="zf-C2H2_12"/>
    <property type="match status" value="1"/>
</dbReference>
<protein>
    <recommendedName>
        <fullName evidence="7">Spindlin interactor and repressor of chromatin-binding protein</fullName>
    </recommendedName>
    <alternativeName>
        <fullName evidence="6">SPIN1-docking protein</fullName>
        <shortName evidence="6">SPIN-DOC</shortName>
    </alternativeName>
</protein>
<feature type="chain" id="PRO_0000321529" description="Spindlin interactor and repressor of chromatin-binding protein">
    <location>
        <begin position="1"/>
        <end position="381"/>
    </location>
</feature>
<feature type="region of interest" description="Disordered" evidence="2">
    <location>
        <begin position="148"/>
        <end position="170"/>
    </location>
</feature>
<feature type="region of interest" description="Disordered" evidence="2">
    <location>
        <begin position="203"/>
        <end position="270"/>
    </location>
</feature>
<feature type="region of interest" description="Disordered" evidence="2">
    <location>
        <begin position="285"/>
        <end position="320"/>
    </location>
</feature>
<feature type="region of interest" description="Disordered" evidence="2">
    <location>
        <begin position="335"/>
        <end position="381"/>
    </location>
</feature>
<feature type="compositionally biased region" description="Polar residues" evidence="2">
    <location>
        <begin position="148"/>
        <end position="158"/>
    </location>
</feature>
<feature type="compositionally biased region" description="Basic and acidic residues" evidence="2">
    <location>
        <begin position="219"/>
        <end position="229"/>
    </location>
</feature>
<feature type="compositionally biased region" description="Basic and acidic residues" evidence="2">
    <location>
        <begin position="288"/>
        <end position="299"/>
    </location>
</feature>
<feature type="compositionally biased region" description="Low complexity" evidence="2">
    <location>
        <begin position="304"/>
        <end position="315"/>
    </location>
</feature>
<feature type="modified residue" description="Phosphoserine" evidence="1">
    <location>
        <position position="122"/>
    </location>
</feature>
<feature type="modified residue" description="Phosphoserine" evidence="1">
    <location>
        <position position="149"/>
    </location>
</feature>
<feature type="modified residue" description="Phosphoserine" evidence="9">
    <location>
        <position position="249"/>
    </location>
</feature>
<feature type="modified residue" description="Phosphoserine" evidence="1">
    <location>
        <position position="252"/>
    </location>
</feature>
<feature type="modified residue" description="Phosphoserine" evidence="1">
    <location>
        <position position="310"/>
    </location>
</feature>
<feature type="modified residue" description="Phosphoserine" evidence="9">
    <location>
        <position position="313"/>
    </location>
</feature>
<feature type="cross-link" description="Glycyl lysine isopeptide (Lys-Gly) (interchain with G-Cter in SUMO2)" evidence="1">
    <location>
        <position position="49"/>
    </location>
</feature>
<feature type="cross-link" description="Glycyl lysine isopeptide (Lys-Gly) (interchain with G-Cter in SUMO2)" evidence="1">
    <location>
        <position position="190"/>
    </location>
</feature>
<feature type="cross-link" description="Glycyl lysine isopeptide (Lys-Gly) (interchain with G-Cter in SUMO2)" evidence="1">
    <location>
        <position position="221"/>
    </location>
</feature>
<feature type="cross-link" description="Glycyl lysine isopeptide (Lys-Gly) (interchain with G-Cter in SUMO2)" evidence="1">
    <location>
        <position position="291"/>
    </location>
</feature>
<feature type="cross-link" description="Glycyl lysine isopeptide (Lys-Gly) (interchain with G-Cter in SUMO2)" evidence="1">
    <location>
        <position position="295"/>
    </location>
</feature>
<feature type="splice variant" id="VSP_031789" description="In isoform 2." evidence="5">
    <original>ASPP</original>
    <variation>GEPC</variation>
    <location>
        <begin position="312"/>
        <end position="315"/>
    </location>
</feature>
<feature type="splice variant" id="VSP_031790" description="In isoform 2." evidence="5">
    <location>
        <begin position="316"/>
        <end position="381"/>
    </location>
</feature>
<feature type="sequence conflict" description="In Ref. 1; BAE39997." evidence="7" ref="1">
    <original>P</original>
    <variation>H</variation>
    <location>
        <position position="55"/>
    </location>
</feature>
<feature type="sequence conflict" description="In Ref. 1; BAE37410." evidence="7" ref="1">
    <original>F</original>
    <variation>L</variation>
    <location>
        <position position="78"/>
    </location>
</feature>
<reference key="1">
    <citation type="journal article" date="2005" name="Science">
        <title>The transcriptional landscape of the mammalian genome.</title>
        <authorList>
            <person name="Carninci P."/>
            <person name="Kasukawa T."/>
            <person name="Katayama S."/>
            <person name="Gough J."/>
            <person name="Frith M.C."/>
            <person name="Maeda N."/>
            <person name="Oyama R."/>
            <person name="Ravasi T."/>
            <person name="Lenhard B."/>
            <person name="Wells C."/>
            <person name="Kodzius R."/>
            <person name="Shimokawa K."/>
            <person name="Bajic V.B."/>
            <person name="Brenner S.E."/>
            <person name="Batalov S."/>
            <person name="Forrest A.R."/>
            <person name="Zavolan M."/>
            <person name="Davis M.J."/>
            <person name="Wilming L.G."/>
            <person name="Aidinis V."/>
            <person name="Allen J.E."/>
            <person name="Ambesi-Impiombato A."/>
            <person name="Apweiler R."/>
            <person name="Aturaliya R.N."/>
            <person name="Bailey T.L."/>
            <person name="Bansal M."/>
            <person name="Baxter L."/>
            <person name="Beisel K.W."/>
            <person name="Bersano T."/>
            <person name="Bono H."/>
            <person name="Chalk A.M."/>
            <person name="Chiu K.P."/>
            <person name="Choudhary V."/>
            <person name="Christoffels A."/>
            <person name="Clutterbuck D.R."/>
            <person name="Crowe M.L."/>
            <person name="Dalla E."/>
            <person name="Dalrymple B.P."/>
            <person name="de Bono B."/>
            <person name="Della Gatta G."/>
            <person name="di Bernardo D."/>
            <person name="Down T."/>
            <person name="Engstrom P."/>
            <person name="Fagiolini M."/>
            <person name="Faulkner G."/>
            <person name="Fletcher C.F."/>
            <person name="Fukushima T."/>
            <person name="Furuno M."/>
            <person name="Futaki S."/>
            <person name="Gariboldi M."/>
            <person name="Georgii-Hemming P."/>
            <person name="Gingeras T.R."/>
            <person name="Gojobori T."/>
            <person name="Green R.E."/>
            <person name="Gustincich S."/>
            <person name="Harbers M."/>
            <person name="Hayashi Y."/>
            <person name="Hensch T.K."/>
            <person name="Hirokawa N."/>
            <person name="Hill D."/>
            <person name="Huminiecki L."/>
            <person name="Iacono M."/>
            <person name="Ikeo K."/>
            <person name="Iwama A."/>
            <person name="Ishikawa T."/>
            <person name="Jakt M."/>
            <person name="Kanapin A."/>
            <person name="Katoh M."/>
            <person name="Kawasawa Y."/>
            <person name="Kelso J."/>
            <person name="Kitamura H."/>
            <person name="Kitano H."/>
            <person name="Kollias G."/>
            <person name="Krishnan S.P."/>
            <person name="Kruger A."/>
            <person name="Kummerfeld S.K."/>
            <person name="Kurochkin I.V."/>
            <person name="Lareau L.F."/>
            <person name="Lazarevic D."/>
            <person name="Lipovich L."/>
            <person name="Liu J."/>
            <person name="Liuni S."/>
            <person name="McWilliam S."/>
            <person name="Madan Babu M."/>
            <person name="Madera M."/>
            <person name="Marchionni L."/>
            <person name="Matsuda H."/>
            <person name="Matsuzawa S."/>
            <person name="Miki H."/>
            <person name="Mignone F."/>
            <person name="Miyake S."/>
            <person name="Morris K."/>
            <person name="Mottagui-Tabar S."/>
            <person name="Mulder N."/>
            <person name="Nakano N."/>
            <person name="Nakauchi H."/>
            <person name="Ng P."/>
            <person name="Nilsson R."/>
            <person name="Nishiguchi S."/>
            <person name="Nishikawa S."/>
            <person name="Nori F."/>
            <person name="Ohara O."/>
            <person name="Okazaki Y."/>
            <person name="Orlando V."/>
            <person name="Pang K.C."/>
            <person name="Pavan W.J."/>
            <person name="Pavesi G."/>
            <person name="Pesole G."/>
            <person name="Petrovsky N."/>
            <person name="Piazza S."/>
            <person name="Reed J."/>
            <person name="Reid J.F."/>
            <person name="Ring B.Z."/>
            <person name="Ringwald M."/>
            <person name="Rost B."/>
            <person name="Ruan Y."/>
            <person name="Salzberg S.L."/>
            <person name="Sandelin A."/>
            <person name="Schneider C."/>
            <person name="Schoenbach C."/>
            <person name="Sekiguchi K."/>
            <person name="Semple C.A."/>
            <person name="Seno S."/>
            <person name="Sessa L."/>
            <person name="Sheng Y."/>
            <person name="Shibata Y."/>
            <person name="Shimada H."/>
            <person name="Shimada K."/>
            <person name="Silva D."/>
            <person name="Sinclair B."/>
            <person name="Sperling S."/>
            <person name="Stupka E."/>
            <person name="Sugiura K."/>
            <person name="Sultana R."/>
            <person name="Takenaka Y."/>
            <person name="Taki K."/>
            <person name="Tammoja K."/>
            <person name="Tan S.L."/>
            <person name="Tang S."/>
            <person name="Taylor M.S."/>
            <person name="Tegner J."/>
            <person name="Teichmann S.A."/>
            <person name="Ueda H.R."/>
            <person name="van Nimwegen E."/>
            <person name="Verardo R."/>
            <person name="Wei C.L."/>
            <person name="Yagi K."/>
            <person name="Yamanishi H."/>
            <person name="Zabarovsky E."/>
            <person name="Zhu S."/>
            <person name="Zimmer A."/>
            <person name="Hide W."/>
            <person name="Bult C."/>
            <person name="Grimmond S.M."/>
            <person name="Teasdale R.D."/>
            <person name="Liu E.T."/>
            <person name="Brusic V."/>
            <person name="Quackenbush J."/>
            <person name="Wahlestedt C."/>
            <person name="Mattick J.S."/>
            <person name="Hume D.A."/>
            <person name="Kai C."/>
            <person name="Sasaki D."/>
            <person name="Tomaru Y."/>
            <person name="Fukuda S."/>
            <person name="Kanamori-Katayama M."/>
            <person name="Suzuki M."/>
            <person name="Aoki J."/>
            <person name="Arakawa T."/>
            <person name="Iida J."/>
            <person name="Imamura K."/>
            <person name="Itoh M."/>
            <person name="Kato T."/>
            <person name="Kawaji H."/>
            <person name="Kawagashira N."/>
            <person name="Kawashima T."/>
            <person name="Kojima M."/>
            <person name="Kondo S."/>
            <person name="Konno H."/>
            <person name="Nakano K."/>
            <person name="Ninomiya N."/>
            <person name="Nishio T."/>
            <person name="Okada M."/>
            <person name="Plessy C."/>
            <person name="Shibata K."/>
            <person name="Shiraki T."/>
            <person name="Suzuki S."/>
            <person name="Tagami M."/>
            <person name="Waki K."/>
            <person name="Watahiki A."/>
            <person name="Okamura-Oho Y."/>
            <person name="Suzuki H."/>
            <person name="Kawai J."/>
            <person name="Hayashizaki Y."/>
        </authorList>
    </citation>
    <scope>NUCLEOTIDE SEQUENCE [LARGE SCALE MRNA] (ISOFORMS 1 AND 2)</scope>
    <source>
        <strain>C57BL/6J</strain>
        <strain>DBA/2J</strain>
        <tissue>Adipose tissue</tissue>
    </source>
</reference>
<reference key="2">
    <citation type="journal article" date="2004" name="Genome Res.">
        <title>The status, quality, and expansion of the NIH full-length cDNA project: the Mammalian Gene Collection (MGC).</title>
        <authorList>
            <consortium name="The MGC Project Team"/>
        </authorList>
    </citation>
    <scope>NUCLEOTIDE SEQUENCE [LARGE SCALE MRNA] (ISOFORM 1)</scope>
</reference>
<reference key="3">
    <citation type="journal article" date="2010" name="Cell">
        <title>A tissue-specific atlas of mouse protein phosphorylation and expression.</title>
        <authorList>
            <person name="Huttlin E.L."/>
            <person name="Jedrychowski M.P."/>
            <person name="Elias J.E."/>
            <person name="Goswami T."/>
            <person name="Rad R."/>
            <person name="Beausoleil S.A."/>
            <person name="Villen J."/>
            <person name="Haas W."/>
            <person name="Sowa M.E."/>
            <person name="Gygi S.P."/>
        </authorList>
    </citation>
    <scope>PHOSPHORYLATION [LARGE SCALE ANALYSIS] AT SER-249 AND SER-313</scope>
    <scope>IDENTIFICATION BY MASS SPECTROMETRY [LARGE SCALE ANALYSIS]</scope>
    <source>
        <tissue>Pancreas</tissue>
        <tissue>Spleen</tissue>
        <tissue>Testis</tissue>
    </source>
</reference>
<reference key="4">
    <citation type="journal article" date="2017" name="J. Biol. Chem.">
        <title>A transcriptional coregulator, SPIN-DOC, attenuates the coactivator activity of Spindlin1.</title>
        <authorList>
            <person name="Bae N."/>
            <person name="Gao M."/>
            <person name="Li X."/>
            <person name="Premkumar T."/>
            <person name="Sbardella G."/>
            <person name="Chen J."/>
            <person name="Bedford M.T."/>
        </authorList>
    </citation>
    <scope>CAUTION</scope>
</reference>
<reference key="5">
    <citation type="journal article" date="2021" name="Nat. Commun.">
        <title>SPINDOC binds PARP1 to facilitate PARylation.</title>
        <authorList>
            <person name="Yang F."/>
            <person name="Chen J."/>
            <person name="Liu B."/>
            <person name="Gao G."/>
            <person name="Sebastian M."/>
            <person name="Jeter C."/>
            <person name="Shen J."/>
            <person name="Person M.D."/>
            <person name="Bedford M.T."/>
        </authorList>
    </citation>
    <scope>FUNCTION</scope>
    <scope>DISRUPTION PHENOTYPE</scope>
</reference>
<organism>
    <name type="scientific">Mus musculus</name>
    <name type="common">Mouse</name>
    <dbReference type="NCBI Taxonomy" id="10090"/>
    <lineage>
        <taxon>Eukaryota</taxon>
        <taxon>Metazoa</taxon>
        <taxon>Chordata</taxon>
        <taxon>Craniata</taxon>
        <taxon>Vertebrata</taxon>
        <taxon>Euteleostomi</taxon>
        <taxon>Mammalia</taxon>
        <taxon>Eutheria</taxon>
        <taxon>Euarchontoglires</taxon>
        <taxon>Glires</taxon>
        <taxon>Rodentia</taxon>
        <taxon>Myomorpha</taxon>
        <taxon>Muroidea</taxon>
        <taxon>Muridae</taxon>
        <taxon>Murinae</taxon>
        <taxon>Mus</taxon>
        <taxon>Mus</taxon>
    </lineage>
</organism>
<proteinExistence type="evidence at protein level"/>
<evidence type="ECO:0000250" key="1">
    <source>
        <dbReference type="UniProtKB" id="Q9BUA3"/>
    </source>
</evidence>
<evidence type="ECO:0000256" key="2">
    <source>
        <dbReference type="SAM" id="MobiDB-lite"/>
    </source>
</evidence>
<evidence type="ECO:0000269" key="3">
    <source>
    </source>
</evidence>
<evidence type="ECO:0000269" key="4">
    <source>
    </source>
</evidence>
<evidence type="ECO:0000303" key="5">
    <source>
    </source>
</evidence>
<evidence type="ECO:0000303" key="6">
    <source>
    </source>
</evidence>
<evidence type="ECO:0000305" key="7"/>
<evidence type="ECO:0000312" key="8">
    <source>
        <dbReference type="MGI" id="MGI:2147611"/>
    </source>
</evidence>
<evidence type="ECO:0007744" key="9">
    <source>
    </source>
</evidence>
<gene>
    <name evidence="6 8" type="primary">Spindoc</name>
</gene>
<sequence>MALKAKGAAALDCFEVTLKCEEGDDDDEAVVVAVIPRPEPMLRVTQQEKTPPPRPNLLEAGVEGCEELKQQVSWEQEFLVGNSPGGSGRALCMVCGAEIRSPSADTARAHILEQHPHTLDLSPSEKSNILEAWSEGVALLQDIQADQPSLPSLESGQDGQPDPISNPDPVRMPAEIVVLLDSEDNPSLPKRLRPRGLRPLELPVTPVIEQGNKKPRGQRWKESPENEPARKKRSRHMTKILDPDPDPPSPESPTETFAAPAEVRHFTDGSFPPGFVLQLFSHTQLRTTDCKDSSKDSRAAEGLPQPQNPSSASPPGLRGTLDLQVIRVRMEEPPAVSLLQDWSKHPQGTKGVGTGDKPDWPTVLSESSATVKGQPKAGSGV</sequence>